<proteinExistence type="inferred from homology"/>
<sequence>MKALRIVFMGTPEFAVGILDAIAKQNKHEIVGVITAADKPAGRGQKIKYSAVKEYALKKELTLLQPTNLKDESFLLALKSLNANLHIVVAFRMLPKVVWAMPELGTFNLHASLLPNYRGAAPINWAIINGETKTGVTTFFIDDKIDTGAMILSKELEISESENLGDLHDKLMVLGCDAVLETLDKIAHGNVVTTIQEDTSDIKTAYKLDRDNCKIDFTKNITEVYNLIRGLSPYPSAWCNFRDADQEFSIKIYDTKQEVLLHDYTIGSVITTKKEIKIAVLGGFIQVLSLQFPGKKKMMAHELLNGLTFSEFAMVF</sequence>
<name>FMT_FLAPJ</name>
<keyword id="KW-0648">Protein biosynthesis</keyword>
<keyword id="KW-1185">Reference proteome</keyword>
<keyword id="KW-0808">Transferase</keyword>
<feature type="chain" id="PRO_1000203859" description="Methionyl-tRNA formyltransferase">
    <location>
        <begin position="1"/>
        <end position="316"/>
    </location>
</feature>
<feature type="binding site" evidence="1">
    <location>
        <begin position="112"/>
        <end position="115"/>
    </location>
    <ligand>
        <name>(6S)-5,6,7,8-tetrahydrofolate</name>
        <dbReference type="ChEBI" id="CHEBI:57453"/>
    </ligand>
</feature>
<reference key="1">
    <citation type="journal article" date="2007" name="Nat. Biotechnol.">
        <title>Complete genome sequence of the fish pathogen Flavobacterium psychrophilum.</title>
        <authorList>
            <person name="Duchaud E."/>
            <person name="Boussaha M."/>
            <person name="Loux V."/>
            <person name="Bernardet J.-F."/>
            <person name="Michel C."/>
            <person name="Kerouault B."/>
            <person name="Mondot S."/>
            <person name="Nicolas P."/>
            <person name="Bossy R."/>
            <person name="Caron C."/>
            <person name="Bessieres P."/>
            <person name="Gibrat J.-F."/>
            <person name="Claverol S."/>
            <person name="Dumetz F."/>
            <person name="Le Henaff M."/>
            <person name="Benmansour A."/>
        </authorList>
    </citation>
    <scope>NUCLEOTIDE SEQUENCE [LARGE SCALE GENOMIC DNA]</scope>
    <source>
        <strain>ATCC 49511 / DSM 21280 / CIP 103535 / JIP02/86</strain>
    </source>
</reference>
<evidence type="ECO:0000255" key="1">
    <source>
        <dbReference type="HAMAP-Rule" id="MF_00182"/>
    </source>
</evidence>
<organism>
    <name type="scientific">Flavobacterium psychrophilum (strain ATCC 49511 / DSM 21280 / CIP 103535 / JIP02/86)</name>
    <dbReference type="NCBI Taxonomy" id="402612"/>
    <lineage>
        <taxon>Bacteria</taxon>
        <taxon>Pseudomonadati</taxon>
        <taxon>Bacteroidota</taxon>
        <taxon>Flavobacteriia</taxon>
        <taxon>Flavobacteriales</taxon>
        <taxon>Flavobacteriaceae</taxon>
        <taxon>Flavobacterium</taxon>
    </lineage>
</organism>
<accession>A6H148</accession>
<protein>
    <recommendedName>
        <fullName evidence="1">Methionyl-tRNA formyltransferase</fullName>
        <ecNumber evidence="1">2.1.2.9</ecNumber>
    </recommendedName>
</protein>
<dbReference type="EC" id="2.1.2.9" evidence="1"/>
<dbReference type="EMBL" id="AM398681">
    <property type="protein sequence ID" value="CAL44072.1"/>
    <property type="molecule type" value="Genomic_DNA"/>
</dbReference>
<dbReference type="RefSeq" id="WP_011964109.1">
    <property type="nucleotide sequence ID" value="NC_009613.3"/>
</dbReference>
<dbReference type="RefSeq" id="YP_001296874.1">
    <property type="nucleotide sequence ID" value="NC_009613.3"/>
</dbReference>
<dbReference type="SMR" id="A6H148"/>
<dbReference type="STRING" id="402612.FP2009"/>
<dbReference type="EnsemblBacteria" id="CAL44072">
    <property type="protein sequence ID" value="CAL44072"/>
    <property type="gene ID" value="FP2009"/>
</dbReference>
<dbReference type="GeneID" id="66551808"/>
<dbReference type="KEGG" id="fps:FP2009"/>
<dbReference type="PATRIC" id="fig|402612.5.peg.2033"/>
<dbReference type="eggNOG" id="COG0223">
    <property type="taxonomic scope" value="Bacteria"/>
</dbReference>
<dbReference type="HOGENOM" id="CLU_033347_1_1_10"/>
<dbReference type="OrthoDB" id="9802815at2"/>
<dbReference type="Proteomes" id="UP000006394">
    <property type="component" value="Chromosome"/>
</dbReference>
<dbReference type="GO" id="GO:0005829">
    <property type="term" value="C:cytosol"/>
    <property type="evidence" value="ECO:0007669"/>
    <property type="project" value="TreeGrafter"/>
</dbReference>
<dbReference type="GO" id="GO:0004479">
    <property type="term" value="F:methionyl-tRNA formyltransferase activity"/>
    <property type="evidence" value="ECO:0007669"/>
    <property type="project" value="UniProtKB-UniRule"/>
</dbReference>
<dbReference type="CDD" id="cd08646">
    <property type="entry name" value="FMT_core_Met-tRNA-FMT_N"/>
    <property type="match status" value="1"/>
</dbReference>
<dbReference type="CDD" id="cd08704">
    <property type="entry name" value="Met_tRNA_FMT_C"/>
    <property type="match status" value="1"/>
</dbReference>
<dbReference type="Gene3D" id="3.40.50.12230">
    <property type="match status" value="1"/>
</dbReference>
<dbReference type="HAMAP" id="MF_00182">
    <property type="entry name" value="Formyl_trans"/>
    <property type="match status" value="1"/>
</dbReference>
<dbReference type="InterPro" id="IPR005794">
    <property type="entry name" value="Fmt"/>
</dbReference>
<dbReference type="InterPro" id="IPR005793">
    <property type="entry name" value="Formyl_trans_C"/>
</dbReference>
<dbReference type="InterPro" id="IPR002376">
    <property type="entry name" value="Formyl_transf_N"/>
</dbReference>
<dbReference type="InterPro" id="IPR036477">
    <property type="entry name" value="Formyl_transf_N_sf"/>
</dbReference>
<dbReference type="InterPro" id="IPR011034">
    <property type="entry name" value="Formyl_transferase-like_C_sf"/>
</dbReference>
<dbReference type="InterPro" id="IPR044135">
    <property type="entry name" value="Met-tRNA-FMT_C"/>
</dbReference>
<dbReference type="InterPro" id="IPR041711">
    <property type="entry name" value="Met-tRNA-FMT_N"/>
</dbReference>
<dbReference type="NCBIfam" id="TIGR00460">
    <property type="entry name" value="fmt"/>
    <property type="match status" value="1"/>
</dbReference>
<dbReference type="PANTHER" id="PTHR11138">
    <property type="entry name" value="METHIONYL-TRNA FORMYLTRANSFERASE"/>
    <property type="match status" value="1"/>
</dbReference>
<dbReference type="PANTHER" id="PTHR11138:SF5">
    <property type="entry name" value="METHIONYL-TRNA FORMYLTRANSFERASE, MITOCHONDRIAL"/>
    <property type="match status" value="1"/>
</dbReference>
<dbReference type="Pfam" id="PF02911">
    <property type="entry name" value="Formyl_trans_C"/>
    <property type="match status" value="1"/>
</dbReference>
<dbReference type="Pfam" id="PF00551">
    <property type="entry name" value="Formyl_trans_N"/>
    <property type="match status" value="1"/>
</dbReference>
<dbReference type="SUPFAM" id="SSF50486">
    <property type="entry name" value="FMT C-terminal domain-like"/>
    <property type="match status" value="1"/>
</dbReference>
<dbReference type="SUPFAM" id="SSF53328">
    <property type="entry name" value="Formyltransferase"/>
    <property type="match status" value="1"/>
</dbReference>
<gene>
    <name evidence="1" type="primary">fmt</name>
    <name type="ordered locus">FP2009</name>
</gene>
<comment type="function">
    <text evidence="1">Attaches a formyl group to the free amino group of methionyl-tRNA(fMet). The formyl group appears to play a dual role in the initiator identity of N-formylmethionyl-tRNA by promoting its recognition by IF2 and preventing the misappropriation of this tRNA by the elongation apparatus.</text>
</comment>
<comment type="catalytic activity">
    <reaction evidence="1">
        <text>L-methionyl-tRNA(fMet) + (6R)-10-formyltetrahydrofolate = N-formyl-L-methionyl-tRNA(fMet) + (6S)-5,6,7,8-tetrahydrofolate + H(+)</text>
        <dbReference type="Rhea" id="RHEA:24380"/>
        <dbReference type="Rhea" id="RHEA-COMP:9952"/>
        <dbReference type="Rhea" id="RHEA-COMP:9953"/>
        <dbReference type="ChEBI" id="CHEBI:15378"/>
        <dbReference type="ChEBI" id="CHEBI:57453"/>
        <dbReference type="ChEBI" id="CHEBI:78530"/>
        <dbReference type="ChEBI" id="CHEBI:78844"/>
        <dbReference type="ChEBI" id="CHEBI:195366"/>
        <dbReference type="EC" id="2.1.2.9"/>
    </reaction>
</comment>
<comment type="similarity">
    <text evidence="1">Belongs to the Fmt family.</text>
</comment>